<sequence>MVEKEEVSGGGGGISEEEAAQYDRQIRLWGLEAQKRLRASRVLIVGMKGLGAEIAKNLILAGVKGLTMLDHEQVSPEDLGAQFLIRTGSVGQNRAEASLERAQNLNPMVDVKVDTEDIEKKPESFFTEFDAVCLTCCSKDVIIKVDQICHRNSIKFFTGDVFGYHGYTFANLGEHEFVEEKTKVTKVSQGVEDGPDAKRAKLDSSETTMVKKKVLFCPVKEALAVDWSGEKAQAALKRTAPDYFLLQVLLKFRTDKGRDPTSDSYSEDAELLLQIRNDVFDSLGVSPDLLPDDFVRYCFSEMAPVCAVVGGILAQEIVKALSQRDPPHNNFFFFDGMKGSGIVECLGPQ</sequence>
<organism>
    <name type="scientific">Rattus norvegicus</name>
    <name type="common">Rat</name>
    <dbReference type="NCBI Taxonomy" id="10116"/>
    <lineage>
        <taxon>Eukaryota</taxon>
        <taxon>Metazoa</taxon>
        <taxon>Chordata</taxon>
        <taxon>Craniata</taxon>
        <taxon>Vertebrata</taxon>
        <taxon>Euteleostomi</taxon>
        <taxon>Mammalia</taxon>
        <taxon>Eutheria</taxon>
        <taxon>Euarchontoglires</taxon>
        <taxon>Glires</taxon>
        <taxon>Rodentia</taxon>
        <taxon>Myomorpha</taxon>
        <taxon>Muroidea</taxon>
        <taxon>Muridae</taxon>
        <taxon>Murinae</taxon>
        <taxon>Rattus</taxon>
    </lineage>
</organism>
<protein>
    <recommendedName>
        <fullName>SUMO-activating enzyme subunit 1</fullName>
    </recommendedName>
    <alternativeName>
        <fullName>Ubiquitin-like 1-activating enzyme E1A</fullName>
    </alternativeName>
    <component>
        <recommendedName>
            <fullName>SUMO-activating enzyme subunit 1, N-terminally processed</fullName>
        </recommendedName>
    </component>
</protein>
<comment type="function">
    <text evidence="1">The heterodimer acts as an E1 ligase for SUMO1, SUMO2, SUMO3, and probably SUMO4. It mediates ATP-dependent activation of SUMO proteins followed by formation of a thioester bond between a SUMO protein and a conserved active site cysteine residue on UBA2/SAE2 (By similarity).</text>
</comment>
<comment type="pathway">
    <text>Protein modification; protein sumoylation.</text>
</comment>
<comment type="subunit">
    <text evidence="1">Heterodimer of SAE1 and UBA2/SAE2. The heterodimer corresponds to the two domains that are encoded on a single polypeptide chain in ubiquitin-activating enzyme E1. Interacts with UBE2I (By similarity).</text>
</comment>
<comment type="subcellular location">
    <subcellularLocation>
        <location evidence="1">Nucleus</location>
    </subcellularLocation>
</comment>
<comment type="similarity">
    <text evidence="4">Belongs to the ubiquitin-activating E1 family.</text>
</comment>
<gene>
    <name type="primary">Sae1</name>
    <name type="synonym">Uble1a</name>
</gene>
<reference key="1">
    <citation type="journal article" date="2004" name="Genome Res.">
        <title>The status, quality, and expansion of the NIH full-length cDNA project: the Mammalian Gene Collection (MGC).</title>
        <authorList>
            <consortium name="The MGC Project Team"/>
        </authorList>
    </citation>
    <scope>NUCLEOTIDE SEQUENCE [LARGE SCALE MRNA]</scope>
    <source>
        <tissue>Testis</tissue>
    </source>
</reference>
<accession>Q6AXQ0</accession>
<name>SAE1_RAT</name>
<feature type="chain" id="PRO_0000423293" description="SUMO-activating enzyme subunit 1">
    <location>
        <begin position="1"/>
        <end position="349"/>
    </location>
</feature>
<feature type="initiator methionine" description="Removed; alternate" evidence="3">
    <location>
        <position position="1"/>
    </location>
</feature>
<feature type="chain" id="PRO_0000268868" description="SUMO-activating enzyme subunit 1, N-terminally processed">
    <location>
        <begin position="2"/>
        <end position="349"/>
    </location>
</feature>
<feature type="modified residue" description="N-acetylmethionine" evidence="3">
    <location>
        <position position="1"/>
    </location>
</feature>
<feature type="modified residue" description="N-acetylvaline; in SUMO-activating enzyme subunit 1, N-terminally processed" evidence="3">
    <location>
        <position position="2"/>
    </location>
</feature>
<feature type="modified residue" description="Phosphoserine" evidence="3">
    <location>
        <position position="15"/>
    </location>
</feature>
<feature type="modified residue" description="N6-acetyllysine" evidence="2">
    <location>
        <position position="201"/>
    </location>
</feature>
<keyword id="KW-0007">Acetylation</keyword>
<keyword id="KW-0436">Ligase</keyword>
<keyword id="KW-0539">Nucleus</keyword>
<keyword id="KW-0597">Phosphoprotein</keyword>
<keyword id="KW-1185">Reference proteome</keyword>
<keyword id="KW-0833">Ubl conjugation pathway</keyword>
<proteinExistence type="evidence at transcript level"/>
<evidence type="ECO:0000250" key="1"/>
<evidence type="ECO:0000250" key="2">
    <source>
        <dbReference type="UniProtKB" id="Q9R1T2"/>
    </source>
</evidence>
<evidence type="ECO:0000250" key="3">
    <source>
        <dbReference type="UniProtKB" id="Q9UBE0"/>
    </source>
</evidence>
<evidence type="ECO:0000305" key="4"/>
<dbReference type="EMBL" id="BC079411">
    <property type="protein sequence ID" value="AAH79411.1"/>
    <property type="molecule type" value="mRNA"/>
</dbReference>
<dbReference type="RefSeq" id="NP_001012063.1">
    <property type="nucleotide sequence ID" value="NM_001012063.1"/>
</dbReference>
<dbReference type="SMR" id="Q6AXQ0"/>
<dbReference type="BioGRID" id="258986">
    <property type="interactions" value="1"/>
</dbReference>
<dbReference type="FunCoup" id="Q6AXQ0">
    <property type="interactions" value="4356"/>
</dbReference>
<dbReference type="STRING" id="10116.ENSRNOP00000020402"/>
<dbReference type="iPTMnet" id="Q6AXQ0"/>
<dbReference type="PhosphoSitePlus" id="Q6AXQ0"/>
<dbReference type="jPOST" id="Q6AXQ0"/>
<dbReference type="PaxDb" id="10116-ENSRNOP00000020402"/>
<dbReference type="Ensembl" id="ENSRNOT00000020402.7">
    <property type="protein sequence ID" value="ENSRNOP00000020402.4"/>
    <property type="gene ID" value="ENSRNOG00000015128.7"/>
</dbReference>
<dbReference type="GeneID" id="308384"/>
<dbReference type="KEGG" id="rno:308384"/>
<dbReference type="UCSC" id="RGD:1306098">
    <property type="organism name" value="rat"/>
</dbReference>
<dbReference type="AGR" id="RGD:1306098"/>
<dbReference type="CTD" id="10055"/>
<dbReference type="RGD" id="1306098">
    <property type="gene designation" value="Sae1"/>
</dbReference>
<dbReference type="eggNOG" id="KOG2014">
    <property type="taxonomic scope" value="Eukaryota"/>
</dbReference>
<dbReference type="GeneTree" id="ENSGT00550000075007"/>
<dbReference type="HOGENOM" id="CLU_002556_4_0_1"/>
<dbReference type="InParanoid" id="Q6AXQ0"/>
<dbReference type="OMA" id="EFFGQFD"/>
<dbReference type="OrthoDB" id="412647at2759"/>
<dbReference type="PhylomeDB" id="Q6AXQ0"/>
<dbReference type="TreeFam" id="TF315037"/>
<dbReference type="Reactome" id="R-RNO-3065676">
    <property type="pathway name" value="SUMO is conjugated to E1 (UBA2:SAE1)"/>
</dbReference>
<dbReference type="Reactome" id="R-RNO-3065678">
    <property type="pathway name" value="SUMO is transferred from E1 to E2 (UBE2I, UBC9)"/>
</dbReference>
<dbReference type="UniPathway" id="UPA00886"/>
<dbReference type="PRO" id="PR:Q6AXQ0"/>
<dbReference type="Proteomes" id="UP000002494">
    <property type="component" value="Chromosome 1"/>
</dbReference>
<dbReference type="Bgee" id="ENSRNOG00000015128">
    <property type="expression patterns" value="Expressed in thymus and 19 other cell types or tissues"/>
</dbReference>
<dbReference type="GO" id="GO:0005737">
    <property type="term" value="C:cytoplasm"/>
    <property type="evidence" value="ECO:0000318"/>
    <property type="project" value="GO_Central"/>
</dbReference>
<dbReference type="GO" id="GO:0005654">
    <property type="term" value="C:nucleoplasm"/>
    <property type="evidence" value="ECO:0007669"/>
    <property type="project" value="Ensembl"/>
</dbReference>
<dbReference type="GO" id="GO:0031510">
    <property type="term" value="C:SUMO activating enzyme complex"/>
    <property type="evidence" value="ECO:0000250"/>
    <property type="project" value="UniProtKB"/>
</dbReference>
<dbReference type="GO" id="GO:0043008">
    <property type="term" value="F:ATP-dependent protein binding"/>
    <property type="evidence" value="ECO:0000266"/>
    <property type="project" value="RGD"/>
</dbReference>
<dbReference type="GO" id="GO:0046982">
    <property type="term" value="F:protein heterodimerization activity"/>
    <property type="evidence" value="ECO:0000266"/>
    <property type="project" value="RGD"/>
</dbReference>
<dbReference type="GO" id="GO:0044388">
    <property type="term" value="F:small protein activating enzyme binding"/>
    <property type="evidence" value="ECO:0000266"/>
    <property type="project" value="RGD"/>
</dbReference>
<dbReference type="GO" id="GO:0019948">
    <property type="term" value="F:SUMO activating enzyme activity"/>
    <property type="evidence" value="ECO:0000318"/>
    <property type="project" value="GO_Central"/>
</dbReference>
<dbReference type="GO" id="GO:0033235">
    <property type="term" value="P:positive regulation of protein sumoylation"/>
    <property type="evidence" value="ECO:0000266"/>
    <property type="project" value="RGD"/>
</dbReference>
<dbReference type="GO" id="GO:0016925">
    <property type="term" value="P:protein sumoylation"/>
    <property type="evidence" value="ECO:0000250"/>
    <property type="project" value="UniProtKB"/>
</dbReference>
<dbReference type="CDD" id="cd01492">
    <property type="entry name" value="Aos1_SUMO"/>
    <property type="match status" value="1"/>
</dbReference>
<dbReference type="FunFam" id="3.40.50.720:FF:000274">
    <property type="entry name" value="SUMO-activating enzyme subunit 1 isoform X1"/>
    <property type="match status" value="1"/>
</dbReference>
<dbReference type="Gene3D" id="3.40.50.720">
    <property type="entry name" value="NAD(P)-binding Rossmann-like Domain"/>
    <property type="match status" value="1"/>
</dbReference>
<dbReference type="InterPro" id="IPR045886">
    <property type="entry name" value="ThiF/MoeB/HesA"/>
</dbReference>
<dbReference type="InterPro" id="IPR000594">
    <property type="entry name" value="ThiF_NAD_FAD-bd"/>
</dbReference>
<dbReference type="InterPro" id="IPR035985">
    <property type="entry name" value="Ubiquitin-activating_enz"/>
</dbReference>
<dbReference type="InterPro" id="IPR000011">
    <property type="entry name" value="UBQ/SUMO-activ_enz_E1-like"/>
</dbReference>
<dbReference type="PANTHER" id="PTHR10953:SF162">
    <property type="entry name" value="SUMO-ACTIVATING ENZYME SUBUNIT 1"/>
    <property type="match status" value="1"/>
</dbReference>
<dbReference type="PANTHER" id="PTHR10953">
    <property type="entry name" value="UBIQUITIN-ACTIVATING ENZYME E1"/>
    <property type="match status" value="1"/>
</dbReference>
<dbReference type="Pfam" id="PF00899">
    <property type="entry name" value="ThiF"/>
    <property type="match status" value="1"/>
</dbReference>
<dbReference type="PRINTS" id="PR01849">
    <property type="entry name" value="UBIQUITINACT"/>
</dbReference>
<dbReference type="SUPFAM" id="SSF69572">
    <property type="entry name" value="Activating enzymes of the ubiquitin-like proteins"/>
    <property type="match status" value="1"/>
</dbReference>